<dbReference type="EMBL" id="AP004654">
    <property type="protein sequence ID" value="BAD33172.1"/>
    <property type="molecule type" value="Genomic_DNA"/>
</dbReference>
<dbReference type="EMBL" id="AP008214">
    <property type="protein sequence ID" value="BAF22685.1"/>
    <property type="molecule type" value="Genomic_DNA"/>
</dbReference>
<dbReference type="EMBL" id="AP014964">
    <property type="protein sequence ID" value="BAT03421.1"/>
    <property type="molecule type" value="Genomic_DNA"/>
</dbReference>
<dbReference type="EMBL" id="CM000145">
    <property type="protein sequence ID" value="EEE67897.1"/>
    <property type="molecule type" value="Genomic_DNA"/>
</dbReference>
<dbReference type="EMBL" id="AK120706">
    <property type="status" value="NOT_ANNOTATED_CDS"/>
    <property type="molecule type" value="mRNA"/>
</dbReference>
<dbReference type="RefSeq" id="XP_015650083.1">
    <property type="nucleotide sequence ID" value="XM_015794597.1"/>
</dbReference>
<dbReference type="RefSeq" id="XP_015650084.1">
    <property type="nucleotide sequence ID" value="XM_015794598.1"/>
</dbReference>
<dbReference type="RefSeq" id="XP_015650085.1">
    <property type="nucleotide sequence ID" value="XM_015794599.1"/>
</dbReference>
<dbReference type="RefSeq" id="XP_015650086.1">
    <property type="nucleotide sequence ID" value="XM_015794600.1"/>
</dbReference>
<dbReference type="SMR" id="Q69U54"/>
<dbReference type="FunCoup" id="Q69U54">
    <property type="interactions" value="2010"/>
</dbReference>
<dbReference type="STRING" id="39947.Q69U54"/>
<dbReference type="PaxDb" id="39947-Q69U54"/>
<dbReference type="EnsemblPlants" id="Os08t0103300-01">
    <property type="protein sequence ID" value="Os08t0103300-01"/>
    <property type="gene ID" value="Os08g0103300"/>
</dbReference>
<dbReference type="Gramene" id="Os08t0103300-01">
    <property type="protein sequence ID" value="Os08t0103300-01"/>
    <property type="gene ID" value="Os08g0103300"/>
</dbReference>
<dbReference type="KEGG" id="dosa:Os08g0103300"/>
<dbReference type="eggNOG" id="KOG2502">
    <property type="taxonomic scope" value="Eukaryota"/>
</dbReference>
<dbReference type="InParanoid" id="Q69U54"/>
<dbReference type="OMA" id="CQHGSRR"/>
<dbReference type="OrthoDB" id="8775810at2759"/>
<dbReference type="Proteomes" id="UP000000763">
    <property type="component" value="Chromosome 8"/>
</dbReference>
<dbReference type="Proteomes" id="UP000007752">
    <property type="component" value="Chromosome 8"/>
</dbReference>
<dbReference type="Proteomes" id="UP000059680">
    <property type="component" value="Chromosome 8"/>
</dbReference>
<dbReference type="ExpressionAtlas" id="Q69U54">
    <property type="expression patterns" value="baseline and differential"/>
</dbReference>
<dbReference type="CDD" id="cd22153">
    <property type="entry name" value="F-box_AtTLP-like"/>
    <property type="match status" value="1"/>
</dbReference>
<dbReference type="Gene3D" id="1.20.1280.50">
    <property type="match status" value="1"/>
</dbReference>
<dbReference type="Gene3D" id="3.20.90.10">
    <property type="entry name" value="Tubby Protein, Chain A"/>
    <property type="match status" value="1"/>
</dbReference>
<dbReference type="InterPro" id="IPR036047">
    <property type="entry name" value="F-box-like_dom_sf"/>
</dbReference>
<dbReference type="InterPro" id="IPR001810">
    <property type="entry name" value="F-box_dom"/>
</dbReference>
<dbReference type="InterPro" id="IPR025659">
    <property type="entry name" value="Tubby-like_C"/>
</dbReference>
<dbReference type="InterPro" id="IPR000007">
    <property type="entry name" value="Tubby_C"/>
</dbReference>
<dbReference type="InterPro" id="IPR018066">
    <property type="entry name" value="Tubby_C_CS"/>
</dbReference>
<dbReference type="PANTHER" id="PTHR16517:SF86">
    <property type="entry name" value="TUBBY-LIKE F-BOX PROTEIN 1"/>
    <property type="match status" value="1"/>
</dbReference>
<dbReference type="PANTHER" id="PTHR16517">
    <property type="entry name" value="TUBBY-RELATED"/>
    <property type="match status" value="1"/>
</dbReference>
<dbReference type="Pfam" id="PF12937">
    <property type="entry name" value="F-box-like"/>
    <property type="match status" value="1"/>
</dbReference>
<dbReference type="Pfam" id="PF01167">
    <property type="entry name" value="Tub"/>
    <property type="match status" value="1"/>
</dbReference>
<dbReference type="PRINTS" id="PR01573">
    <property type="entry name" value="SUPERTUBBY"/>
</dbReference>
<dbReference type="SUPFAM" id="SSF81383">
    <property type="entry name" value="F-box domain"/>
    <property type="match status" value="1"/>
</dbReference>
<dbReference type="SUPFAM" id="SSF54518">
    <property type="entry name" value="Tubby C-terminal domain-like"/>
    <property type="match status" value="1"/>
</dbReference>
<dbReference type="PROSITE" id="PS01200">
    <property type="entry name" value="TUB_1"/>
    <property type="match status" value="1"/>
</dbReference>
<dbReference type="PROSITE" id="PS01201">
    <property type="entry name" value="TUB_2"/>
    <property type="match status" value="1"/>
</dbReference>
<organism>
    <name type="scientific">Oryza sativa subsp. japonica</name>
    <name type="common">Rice</name>
    <dbReference type="NCBI Taxonomy" id="39947"/>
    <lineage>
        <taxon>Eukaryota</taxon>
        <taxon>Viridiplantae</taxon>
        <taxon>Streptophyta</taxon>
        <taxon>Embryophyta</taxon>
        <taxon>Tracheophyta</taxon>
        <taxon>Spermatophyta</taxon>
        <taxon>Magnoliopsida</taxon>
        <taxon>Liliopsida</taxon>
        <taxon>Poales</taxon>
        <taxon>Poaceae</taxon>
        <taxon>BOP clade</taxon>
        <taxon>Oryzoideae</taxon>
        <taxon>Oryzeae</taxon>
        <taxon>Oryzinae</taxon>
        <taxon>Oryza</taxon>
        <taxon>Oryza sativa</taxon>
    </lineage>
</organism>
<feature type="chain" id="PRO_0000351131" description="Tubby-like F-box protein 12">
    <location>
        <begin position="1"/>
        <end position="451"/>
    </location>
</feature>
<feature type="domain" description="F-box">
    <location>
        <begin position="57"/>
        <end position="112"/>
    </location>
</feature>
<feature type="region of interest" description="Disordered" evidence="1">
    <location>
        <begin position="387"/>
        <end position="407"/>
    </location>
</feature>
<feature type="compositionally biased region" description="Low complexity" evidence="1">
    <location>
        <begin position="387"/>
        <end position="406"/>
    </location>
</feature>
<feature type="sequence conflict" description="In Ref. 5; AK120706." evidence="3" ref="5">
    <original>V</original>
    <variation>M</variation>
    <location>
        <position position="411"/>
    </location>
</feature>
<evidence type="ECO:0000256" key="1">
    <source>
        <dbReference type="SAM" id="MobiDB-lite"/>
    </source>
</evidence>
<evidence type="ECO:0000269" key="2">
    <source>
    </source>
</evidence>
<evidence type="ECO:0000305" key="3"/>
<evidence type="ECO:0000312" key="4">
    <source>
        <dbReference type="EMBL" id="EEE67897.1"/>
    </source>
</evidence>
<protein>
    <recommendedName>
        <fullName>Tubby-like F-box protein 12</fullName>
        <shortName>OsTLP12</shortName>
    </recommendedName>
    <alternativeName>
        <fullName>Tubby-like F-box protein 2</fullName>
        <shortName>OsTLP2</shortName>
    </alternativeName>
</protein>
<reference key="1">
    <citation type="journal article" date="2005" name="Nature">
        <title>The map-based sequence of the rice genome.</title>
        <authorList>
            <consortium name="International rice genome sequencing project (IRGSP)"/>
        </authorList>
    </citation>
    <scope>NUCLEOTIDE SEQUENCE [LARGE SCALE GENOMIC DNA]</scope>
    <source>
        <strain>cv. Nipponbare</strain>
    </source>
</reference>
<reference key="2">
    <citation type="journal article" date="2008" name="Nucleic Acids Res.">
        <title>The rice annotation project database (RAP-DB): 2008 update.</title>
        <authorList>
            <consortium name="The rice annotation project (RAP)"/>
        </authorList>
    </citation>
    <scope>GENOME REANNOTATION</scope>
    <source>
        <strain>cv. Nipponbare</strain>
    </source>
</reference>
<reference key="3">
    <citation type="journal article" date="2013" name="Rice">
        <title>Improvement of the Oryza sativa Nipponbare reference genome using next generation sequence and optical map data.</title>
        <authorList>
            <person name="Kawahara Y."/>
            <person name="de la Bastide M."/>
            <person name="Hamilton J.P."/>
            <person name="Kanamori H."/>
            <person name="McCombie W.R."/>
            <person name="Ouyang S."/>
            <person name="Schwartz D.C."/>
            <person name="Tanaka T."/>
            <person name="Wu J."/>
            <person name="Zhou S."/>
            <person name="Childs K.L."/>
            <person name="Davidson R.M."/>
            <person name="Lin H."/>
            <person name="Quesada-Ocampo L."/>
            <person name="Vaillancourt B."/>
            <person name="Sakai H."/>
            <person name="Lee S.S."/>
            <person name="Kim J."/>
            <person name="Numa H."/>
            <person name="Itoh T."/>
            <person name="Buell C.R."/>
            <person name="Matsumoto T."/>
        </authorList>
    </citation>
    <scope>GENOME REANNOTATION</scope>
    <source>
        <strain>cv. Nipponbare</strain>
    </source>
</reference>
<reference key="4">
    <citation type="journal article" date="2005" name="PLoS Biol.">
        <title>The genomes of Oryza sativa: a history of duplications.</title>
        <authorList>
            <person name="Yu J."/>
            <person name="Wang J."/>
            <person name="Lin W."/>
            <person name="Li S."/>
            <person name="Li H."/>
            <person name="Zhou J."/>
            <person name="Ni P."/>
            <person name="Dong W."/>
            <person name="Hu S."/>
            <person name="Zeng C."/>
            <person name="Zhang J."/>
            <person name="Zhang Y."/>
            <person name="Li R."/>
            <person name="Xu Z."/>
            <person name="Li S."/>
            <person name="Li X."/>
            <person name="Zheng H."/>
            <person name="Cong L."/>
            <person name="Lin L."/>
            <person name="Yin J."/>
            <person name="Geng J."/>
            <person name="Li G."/>
            <person name="Shi J."/>
            <person name="Liu J."/>
            <person name="Lv H."/>
            <person name="Li J."/>
            <person name="Wang J."/>
            <person name="Deng Y."/>
            <person name="Ran L."/>
            <person name="Shi X."/>
            <person name="Wang X."/>
            <person name="Wu Q."/>
            <person name="Li C."/>
            <person name="Ren X."/>
            <person name="Wang J."/>
            <person name="Wang X."/>
            <person name="Li D."/>
            <person name="Liu D."/>
            <person name="Zhang X."/>
            <person name="Ji Z."/>
            <person name="Zhao W."/>
            <person name="Sun Y."/>
            <person name="Zhang Z."/>
            <person name="Bao J."/>
            <person name="Han Y."/>
            <person name="Dong L."/>
            <person name="Ji J."/>
            <person name="Chen P."/>
            <person name="Wu S."/>
            <person name="Liu J."/>
            <person name="Xiao Y."/>
            <person name="Bu D."/>
            <person name="Tan J."/>
            <person name="Yang L."/>
            <person name="Ye C."/>
            <person name="Zhang J."/>
            <person name="Xu J."/>
            <person name="Zhou Y."/>
            <person name="Yu Y."/>
            <person name="Zhang B."/>
            <person name="Zhuang S."/>
            <person name="Wei H."/>
            <person name="Liu B."/>
            <person name="Lei M."/>
            <person name="Yu H."/>
            <person name="Li Y."/>
            <person name="Xu H."/>
            <person name="Wei S."/>
            <person name="He X."/>
            <person name="Fang L."/>
            <person name="Zhang Z."/>
            <person name="Zhang Y."/>
            <person name="Huang X."/>
            <person name="Su Z."/>
            <person name="Tong W."/>
            <person name="Li J."/>
            <person name="Tong Z."/>
            <person name="Li S."/>
            <person name="Ye J."/>
            <person name="Wang L."/>
            <person name="Fang L."/>
            <person name="Lei T."/>
            <person name="Chen C.-S."/>
            <person name="Chen H.-C."/>
            <person name="Xu Z."/>
            <person name="Li H."/>
            <person name="Huang H."/>
            <person name="Zhang F."/>
            <person name="Xu H."/>
            <person name="Li N."/>
            <person name="Zhao C."/>
            <person name="Li S."/>
            <person name="Dong L."/>
            <person name="Huang Y."/>
            <person name="Li L."/>
            <person name="Xi Y."/>
            <person name="Qi Q."/>
            <person name="Li W."/>
            <person name="Zhang B."/>
            <person name="Hu W."/>
            <person name="Zhang Y."/>
            <person name="Tian X."/>
            <person name="Jiao Y."/>
            <person name="Liang X."/>
            <person name="Jin J."/>
            <person name="Gao L."/>
            <person name="Zheng W."/>
            <person name="Hao B."/>
            <person name="Liu S.-M."/>
            <person name="Wang W."/>
            <person name="Yuan L."/>
            <person name="Cao M."/>
            <person name="McDermott J."/>
            <person name="Samudrala R."/>
            <person name="Wang J."/>
            <person name="Wong G.K.-S."/>
            <person name="Yang H."/>
        </authorList>
    </citation>
    <scope>NUCLEOTIDE SEQUENCE [LARGE SCALE GENOMIC DNA]</scope>
    <source>
        <strain>cv. Nipponbare</strain>
    </source>
</reference>
<reference key="5">
    <citation type="journal article" date="2003" name="Science">
        <title>Collection, mapping, and annotation of over 28,000 cDNA clones from japonica rice.</title>
        <authorList>
            <consortium name="The rice full-length cDNA consortium"/>
        </authorList>
    </citation>
    <scope>NUCLEOTIDE SEQUENCE [LARGE SCALE MRNA]</scope>
    <source>
        <strain>cv. Nipponbare</strain>
    </source>
</reference>
<reference key="6">
    <citation type="journal article" date="2008" name="FEBS J.">
        <title>Identification of rice TUBBY-like genes and their evolution.</title>
        <authorList>
            <person name="Liu Q."/>
        </authorList>
    </citation>
    <scope>GENE FAMILY</scope>
    <scope>NOMENCLATURE</scope>
</reference>
<reference key="7">
    <citation type="journal article" date="2008" name="Genomics">
        <title>Genomewide comparative phylogenetic and molecular evolutionary analysis of tubby-like protein family in Arabidopsis, rice, and poplar.</title>
        <authorList>
            <person name="Yang Z."/>
            <person name="Zhou Y."/>
            <person name="Wang X."/>
            <person name="Gu S."/>
            <person name="Yu J."/>
            <person name="Liang G."/>
            <person name="Yan C."/>
            <person name="Xu C."/>
        </authorList>
    </citation>
    <scope>TISSUE SPECIFICITY</scope>
    <scope>GENE FAMILY</scope>
    <scope>NOMENCLATURE</scope>
</reference>
<name>TLP12_ORYSJ</name>
<comment type="tissue specificity">
    <text evidence="2">Ubiquitous.</text>
</comment>
<comment type="similarity">
    <text evidence="3">Belongs to the TUB family.</text>
</comment>
<keyword id="KW-1185">Reference proteome</keyword>
<accession>Q69U54</accession>
<accession>B9FYN0</accession>
<gene>
    <name type="primary">TULP12</name>
    <name type="synonym">TULP2</name>
    <name type="ordered locus">Os08g0103300</name>
    <name type="ordered locus">LOC_Os08g01290</name>
    <name evidence="4" type="ORF">OsJ_25735</name>
    <name type="ORF">P0015C07.29</name>
</gene>
<proteinExistence type="evidence at transcript level"/>
<sequence length="451" mass="50528">MSFRSIVRDVRDSFGSLSRRSFEVRISGLPGLSGHHRGKSLGSLSELRDRPVVVDQSRWVGLPPELLRDVMKRLEEGESNWPSRKDVVACAAVCRTWREICKDIVQSPEICGKLTFPVSLKQPGPRDGLIQCFIKRDKSKLTYYLYLCLSPAVLSENGKFLLAAKRNRRATSTEYIISVDSKNISRSSNGYVGKMRSNFLGTKFVVYDTQPPYNAGSLMSCQHGSRRISSRRVSPKLPTGSYPIAHVKYELNVLGTRGPRRMQCTMHSIPASAVDPEGVVPGQPEQLLPGPFEESFRSTNTSSRFSFMDRSLDFSSSRFSEISGSANQQGEDDIPEAKERPLVLRNKVPRWHEQLQCWCLNFRGRVTVASVKNFQLIAAASSESSQLEQQQQQQQQNHASSSSSASDHGKVILQFGKVGKDMFTMDYRYPLSAFQAFAICLTSFDTKLACE</sequence>